<protein>
    <recommendedName>
        <fullName>U3-lycotoxin-Ls1q</fullName>
    </recommendedName>
    <alternativeName>
        <fullName>Toxin-like structure LSTX-B34</fullName>
    </alternativeName>
</protein>
<proteinExistence type="evidence at transcript level"/>
<evidence type="ECO:0000250" key="1"/>
<evidence type="ECO:0000255" key="2"/>
<evidence type="ECO:0000305" key="3"/>
<accession>B6DCS9</accession>
<comment type="subcellular location">
    <subcellularLocation>
        <location evidence="1">Secreted</location>
    </subcellularLocation>
</comment>
<comment type="tissue specificity">
    <text>Expressed by the venom gland.</text>
</comment>
<comment type="domain">
    <text evidence="1">The presence of a 'disulfide through disulfide knot' structurally defines this protein as a knottin.</text>
</comment>
<comment type="similarity">
    <text evidence="3">Belongs to the neurotoxin 19 (CSTX) family. 01 subfamily.</text>
</comment>
<feature type="signal peptide" evidence="2">
    <location>
        <begin position="1"/>
        <end position="20"/>
    </location>
</feature>
<feature type="propeptide" id="PRO_0000401671" evidence="1">
    <location>
        <begin position="21"/>
        <end position="44"/>
    </location>
</feature>
<feature type="chain" id="PRO_0000401672" description="U3-lycotoxin-Ls1q">
    <location>
        <begin position="45"/>
        <end position="115"/>
    </location>
</feature>
<feature type="disulfide bond" evidence="1">
    <location>
        <begin position="48"/>
        <end position="63"/>
    </location>
</feature>
<feature type="disulfide bond" evidence="1">
    <location>
        <begin position="55"/>
        <end position="72"/>
    </location>
</feature>
<feature type="disulfide bond" evidence="1">
    <location>
        <begin position="62"/>
        <end position="87"/>
    </location>
</feature>
<feature type="disulfide bond" evidence="1">
    <location>
        <begin position="74"/>
        <end position="85"/>
    </location>
</feature>
<sequence length="115" mass="13246">MKFVLLFGVLLVTLFSYSSAEMFDDFDQADEDELLSLIEKEEARAKECTPRFYDCSHDRHSCCRSELFKDVCTCFYPEGGDNEVCTCQQPKHLKYMEKAAGKAKKFGGKVKKWFG</sequence>
<reference key="1">
    <citation type="journal article" date="2010" name="Zoology">
        <title>Transcriptome analysis of the venom glands of the Chinese wolf spider Lycosa singoriensis.</title>
        <authorList>
            <person name="Zhang Y."/>
            <person name="Chen J."/>
            <person name="Tang X."/>
            <person name="Wang F."/>
            <person name="Jiang L."/>
            <person name="Xiong X."/>
            <person name="Wang M."/>
            <person name="Rong M."/>
            <person name="Liu Z."/>
            <person name="Liang S."/>
        </authorList>
    </citation>
    <scope>NUCLEOTIDE SEQUENCE [LARGE SCALE MRNA]</scope>
    <source>
        <tissue>Venom gland</tissue>
    </source>
</reference>
<keyword id="KW-1015">Disulfide bond</keyword>
<keyword id="KW-0960">Knottin</keyword>
<keyword id="KW-0964">Secreted</keyword>
<keyword id="KW-0732">Signal</keyword>
<keyword id="KW-0800">Toxin</keyword>
<name>TX334_LYCSI</name>
<organism>
    <name type="scientific">Lycosa singoriensis</name>
    <name type="common">Wolf spider</name>
    <name type="synonym">Aranea singoriensis</name>
    <dbReference type="NCBI Taxonomy" id="434756"/>
    <lineage>
        <taxon>Eukaryota</taxon>
        <taxon>Metazoa</taxon>
        <taxon>Ecdysozoa</taxon>
        <taxon>Arthropoda</taxon>
        <taxon>Chelicerata</taxon>
        <taxon>Arachnida</taxon>
        <taxon>Araneae</taxon>
        <taxon>Araneomorphae</taxon>
        <taxon>Entelegynae</taxon>
        <taxon>Lycosoidea</taxon>
        <taxon>Lycosidae</taxon>
        <taxon>Lycosa</taxon>
    </lineage>
</organism>
<dbReference type="EMBL" id="EU926013">
    <property type="protein sequence ID" value="ACI41345.1"/>
    <property type="molecule type" value="mRNA"/>
</dbReference>
<dbReference type="EMBL" id="FM864017">
    <property type="protein sequence ID" value="CAS03615.1"/>
    <property type="molecule type" value="mRNA"/>
</dbReference>
<dbReference type="SMR" id="B6DCS9"/>
<dbReference type="ArachnoServer" id="AS000962">
    <property type="toxin name" value="U3-lycotoxin-Ls1q"/>
</dbReference>
<dbReference type="GO" id="GO:0005576">
    <property type="term" value="C:extracellular region"/>
    <property type="evidence" value="ECO:0007669"/>
    <property type="project" value="UniProtKB-SubCell"/>
</dbReference>
<dbReference type="GO" id="GO:0090729">
    <property type="term" value="F:toxin activity"/>
    <property type="evidence" value="ECO:0007669"/>
    <property type="project" value="UniProtKB-KW"/>
</dbReference>
<dbReference type="InterPro" id="IPR019553">
    <property type="entry name" value="Spider_toxin_CSTX_knottin"/>
</dbReference>
<dbReference type="InterPro" id="IPR011142">
    <property type="entry name" value="Spider_toxin_CSTX_Knottin_CS"/>
</dbReference>
<dbReference type="Pfam" id="PF10530">
    <property type="entry name" value="Toxin_35"/>
    <property type="match status" value="1"/>
</dbReference>
<dbReference type="PROSITE" id="PS60029">
    <property type="entry name" value="SPIDER_CSTX"/>
    <property type="match status" value="1"/>
</dbReference>